<feature type="chain" id="PRO_1000165088" description="UPF0313 protein CTN_0332">
    <location>
        <begin position="1"/>
        <end position="567"/>
    </location>
</feature>
<feature type="domain" description="Radical SAM core" evidence="2">
    <location>
        <begin position="288"/>
        <end position="560"/>
    </location>
</feature>
<feature type="binding site" evidence="1">
    <location>
        <position position="303"/>
    </location>
    <ligand>
        <name>[4Fe-4S] cluster</name>
        <dbReference type="ChEBI" id="CHEBI:49883"/>
        <note>4Fe-4S-S-AdoMet</note>
    </ligand>
</feature>
<feature type="binding site" evidence="1">
    <location>
        <position position="307"/>
    </location>
    <ligand>
        <name>[4Fe-4S] cluster</name>
        <dbReference type="ChEBI" id="CHEBI:49883"/>
        <note>4Fe-4S-S-AdoMet</note>
    </ligand>
</feature>
<feature type="binding site" evidence="1">
    <location>
        <position position="310"/>
    </location>
    <ligand>
        <name>[4Fe-4S] cluster</name>
        <dbReference type="ChEBI" id="CHEBI:49883"/>
        <note>4Fe-4S-S-AdoMet</note>
    </ligand>
</feature>
<keyword id="KW-0004">4Fe-4S</keyword>
<keyword id="KW-0408">Iron</keyword>
<keyword id="KW-0411">Iron-sulfur</keyword>
<keyword id="KW-0479">Metal-binding</keyword>
<keyword id="KW-0949">S-adenosyl-L-methionine</keyword>
<reference key="1">
    <citation type="submission" date="2007-11" db="EMBL/GenBank/DDBJ databases">
        <title>The genome sequence of the hyperthermophilic bacterium Thermotoga neapolitana.</title>
        <authorList>
            <person name="Lim S.K."/>
            <person name="Kim J.S."/>
            <person name="Cha S.H."/>
            <person name="Park B.C."/>
            <person name="Lee D.S."/>
            <person name="Tae H.S."/>
            <person name="Kim S.-J."/>
            <person name="Kim J.J."/>
            <person name="Park K.J."/>
            <person name="Lee S.Y."/>
        </authorList>
    </citation>
    <scope>NUCLEOTIDE SEQUENCE [LARGE SCALE GENOMIC DNA]</scope>
    <source>
        <strain>ATCC 49049 / DSM 4359 / NBRC 107923 / NS-E</strain>
    </source>
</reference>
<evidence type="ECO:0000255" key="1">
    <source>
        <dbReference type="HAMAP-Rule" id="MF_01251"/>
    </source>
</evidence>
<evidence type="ECO:0000255" key="2">
    <source>
        <dbReference type="PROSITE-ProRule" id="PRU01266"/>
    </source>
</evidence>
<dbReference type="EMBL" id="CP000916">
    <property type="protein sequence ID" value="ACM22508.1"/>
    <property type="molecule type" value="Genomic_DNA"/>
</dbReference>
<dbReference type="RefSeq" id="WP_015918833.1">
    <property type="nucleotide sequence ID" value="NC_011978.1"/>
</dbReference>
<dbReference type="STRING" id="309803.CTN_0332"/>
<dbReference type="KEGG" id="tna:CTN_0332"/>
<dbReference type="eggNOG" id="COG1032">
    <property type="taxonomic scope" value="Bacteria"/>
</dbReference>
<dbReference type="HOGENOM" id="CLU_018288_2_0_0"/>
<dbReference type="Proteomes" id="UP000000445">
    <property type="component" value="Chromosome"/>
</dbReference>
<dbReference type="GO" id="GO:0051539">
    <property type="term" value="F:4 iron, 4 sulfur cluster binding"/>
    <property type="evidence" value="ECO:0007669"/>
    <property type="project" value="UniProtKB-KW"/>
</dbReference>
<dbReference type="GO" id="GO:0003824">
    <property type="term" value="F:catalytic activity"/>
    <property type="evidence" value="ECO:0007669"/>
    <property type="project" value="InterPro"/>
</dbReference>
<dbReference type="GO" id="GO:0005506">
    <property type="term" value="F:iron ion binding"/>
    <property type="evidence" value="ECO:0007669"/>
    <property type="project" value="UniProtKB-UniRule"/>
</dbReference>
<dbReference type="CDD" id="cd01335">
    <property type="entry name" value="Radical_SAM"/>
    <property type="match status" value="1"/>
</dbReference>
<dbReference type="Gene3D" id="3.80.30.20">
    <property type="entry name" value="tm_1862 like domain"/>
    <property type="match status" value="1"/>
</dbReference>
<dbReference type="HAMAP" id="MF_01251">
    <property type="entry name" value="UPF0313"/>
    <property type="match status" value="1"/>
</dbReference>
<dbReference type="InterPro" id="IPR006638">
    <property type="entry name" value="Elp3/MiaA/NifB-like_rSAM"/>
</dbReference>
<dbReference type="InterPro" id="IPR007197">
    <property type="entry name" value="rSAM"/>
</dbReference>
<dbReference type="InterPro" id="IPR023404">
    <property type="entry name" value="rSAM_horseshoe"/>
</dbReference>
<dbReference type="InterPro" id="IPR022946">
    <property type="entry name" value="UPF0313"/>
</dbReference>
<dbReference type="InterPro" id="IPR024560">
    <property type="entry name" value="UPF0313_C"/>
</dbReference>
<dbReference type="InterPro" id="IPR013704">
    <property type="entry name" value="UPF0313_N"/>
</dbReference>
<dbReference type="NCBIfam" id="TIGR03904">
    <property type="entry name" value="SAM_YgiQ"/>
    <property type="match status" value="1"/>
</dbReference>
<dbReference type="PANTHER" id="PTHR32331">
    <property type="entry name" value="UPF0313 PROTEIN YGIQ"/>
    <property type="match status" value="1"/>
</dbReference>
<dbReference type="PANTHER" id="PTHR32331:SF0">
    <property type="entry name" value="UPF0313 PROTEIN YGIQ"/>
    <property type="match status" value="1"/>
</dbReference>
<dbReference type="Pfam" id="PF11842">
    <property type="entry name" value="DUF3362"/>
    <property type="match status" value="1"/>
</dbReference>
<dbReference type="Pfam" id="PF04055">
    <property type="entry name" value="Radical_SAM"/>
    <property type="match status" value="1"/>
</dbReference>
<dbReference type="Pfam" id="PF08497">
    <property type="entry name" value="Radical_SAM_N"/>
    <property type="match status" value="1"/>
</dbReference>
<dbReference type="SFLD" id="SFLDG01082">
    <property type="entry name" value="B12-binding_domain_containing"/>
    <property type="match status" value="1"/>
</dbReference>
<dbReference type="SFLD" id="SFLDS00029">
    <property type="entry name" value="Radical_SAM"/>
    <property type="match status" value="1"/>
</dbReference>
<dbReference type="SFLD" id="SFLDG01069">
    <property type="entry name" value="UPF0313"/>
    <property type="match status" value="1"/>
</dbReference>
<dbReference type="SMART" id="SM00729">
    <property type="entry name" value="Elp3"/>
    <property type="match status" value="1"/>
</dbReference>
<dbReference type="SUPFAM" id="SSF102114">
    <property type="entry name" value="Radical SAM enzymes"/>
    <property type="match status" value="1"/>
</dbReference>
<dbReference type="PROSITE" id="PS51918">
    <property type="entry name" value="RADICAL_SAM"/>
    <property type="match status" value="1"/>
</dbReference>
<accession>B9KBW2</accession>
<organism>
    <name type="scientific">Thermotoga neapolitana (strain ATCC 49049 / DSM 4359 / NBRC 107923 / NS-E)</name>
    <dbReference type="NCBI Taxonomy" id="309803"/>
    <lineage>
        <taxon>Bacteria</taxon>
        <taxon>Thermotogati</taxon>
        <taxon>Thermotogota</taxon>
        <taxon>Thermotogae</taxon>
        <taxon>Thermotogales</taxon>
        <taxon>Thermotogaceae</taxon>
        <taxon>Thermotoga</taxon>
    </lineage>
</organism>
<gene>
    <name type="ordered locus">CTN_0332</name>
</gene>
<protein>
    <recommendedName>
        <fullName evidence="1">UPF0313 protein CTN_0332</fullName>
    </recommendedName>
</protein>
<comment type="cofactor">
    <cofactor evidence="1">
        <name>[4Fe-4S] cluster</name>
        <dbReference type="ChEBI" id="CHEBI:49883"/>
    </cofactor>
    <text evidence="1">Binds 1 [4Fe-4S] cluster. The cluster is coordinated with 3 cysteines and an exchangeable S-adenosyl-L-methionine.</text>
</comment>
<comment type="similarity">
    <text evidence="1">Belongs to the UPF0313 family.</text>
</comment>
<proteinExistence type="inferred from homology"/>
<name>Y332_THENN</name>
<sequence>MFLPTTREEMKKLGWRELDVILVTGDAYVDHPSFGVALIGHYLVSHGFKVGIIAQPDWRTEKDITRLGRPRLFFGVTAGNVDSMVANYTASKKKRKTDDYTPGGSGGKRPDRATIVYTNLIKRFFPEVPVVLGGLEASLRRFAHYDWWSEKVRKSILVDSKADLLVYGMGEKAVLEIAQILSRTGDIEKCKSVRGVVWWASQKPEEGIELPSYDEISENPEKYAEALKLQTWYTDPYKNILIYQKQDTRYVVQNPPQLPLSQEELDRLYLLPFEREVHPFYAKMGRVKAIETVKFSITAVRGCFGSCSFCALTQHQTTHVSYRSKDSILEEVRILTKKKDFKGTITDVGGPTANLYGSSCSIRETKGQCQKFCLYPSVCKIVRPNHDEFISLLESIRKIPGVRNVFVSSGIRHDFVLAEKDPDVFIRELVKYTPGQLKLAPEHAHPKVLSLMRKPPVELFLEFKKRFETLAKKMGKRKYVIGYFIVGHPGEGWRENNYLRDFILKHLGYFPQQIQIFTPTPGTVSTAMYYSGLDPFTGEKVHVERSLKVRNKMKENVLFKKKGREKR</sequence>